<organismHost>
    <name type="scientific">Bos taurus</name>
    <name type="common">Bovine</name>
    <dbReference type="NCBI Taxonomy" id="9913"/>
</organismHost>
<keyword id="KW-0244">Early protein</keyword>
<keyword id="KW-1185">Reference proteome</keyword>
<protein>
    <recommendedName>
        <fullName>Protein OPG209</fullName>
    </recommendedName>
    <alternativeName>
        <fullName>Protein B23R</fullName>
    </alternativeName>
</protein>
<organism>
    <name type="scientific">Vaccinia virus (strain Western Reserve)</name>
    <name type="common">VACV</name>
    <name type="synonym">Vaccinia virus (strain WR)</name>
    <dbReference type="NCBI Taxonomy" id="10254"/>
    <lineage>
        <taxon>Viruses</taxon>
        <taxon>Varidnaviria</taxon>
        <taxon>Bamfordvirae</taxon>
        <taxon>Nucleocytoviricota</taxon>
        <taxon>Pokkesviricetes</taxon>
        <taxon>Chitovirales</taxon>
        <taxon>Poxviridae</taxon>
        <taxon>Chordopoxvirinae</taxon>
        <taxon>Orthopoxvirus</taxon>
        <taxon>Vaccinia virus</taxon>
    </lineage>
</organism>
<comment type="similarity">
    <text evidence="1">Belongs to the orthopoxvirus OPG209 protein family.</text>
</comment>
<evidence type="ECO:0000305" key="1"/>
<proteinExistence type="inferred from homology"/>
<accession>P17365</accession>
<accession>Q76ZK2</accession>
<gene>
    <name type="primary">OPG209</name>
    <name type="ordered locus">VACWR206</name>
    <name type="ORF">C13L</name>
</gene>
<name>PG209_VACCW</name>
<feature type="chain" id="PRO_0000099413" description="Protein OPG209">
    <location>
        <begin position="1"/>
        <end position="190"/>
    </location>
</feature>
<sequence length="190" mass="21538">MMIYGLIACLIFVTSSIASPLYIPVIPPISEDKSFNSVEVLVSLFRDDQKDYTVTSQFNNYTIDTKDWTIGVLSTPDGLDIPLTNITYWSRFTIGRALFKSESEDIFQKKMSILGVSIECKKSSTLLTFLTVRKMTRVFNKFPDMAYYRGDCLKAVYVTMTYKNTKTGETDYTYLSNGGLPAYYRNGVDG</sequence>
<reference key="1">
    <citation type="journal article" date="1988" name="Virology">
        <title>Analysis of a large cluster of nonessential genes deleted from a vaccinia virus terminal transposition mutant.</title>
        <authorList>
            <person name="Kotwal G.J."/>
            <person name="Moss B."/>
        </authorList>
    </citation>
    <scope>NUCLEOTIDE SEQUENCE [GENOMIC DNA]</scope>
</reference>
<reference key="2">
    <citation type="journal article" date="1989" name="J. Virol.">
        <title>Vaccinia virus encodes two proteins that are structurally related to members of the plasma serine protease inhibitor superfamily.</title>
        <authorList>
            <person name="Kotwal G.J."/>
            <person name="Moss B."/>
        </authorList>
    </citation>
    <scope>NUCLEOTIDE SEQUENCE [GENOMIC DNA]</scope>
</reference>
<reference key="3">
    <citation type="submission" date="2003-02" db="EMBL/GenBank/DDBJ databases">
        <title>Sequencing of the coding region of Vaccinia-WR to an average 9-fold redundancy and an error rate of 0.16/10kb.</title>
        <authorList>
            <person name="Esposito J.J."/>
            <person name="Frace A.M."/>
            <person name="Sammons S.A."/>
            <person name="Olsen-Rasmussen M."/>
            <person name="Osborne J."/>
            <person name="Wohlhueter R."/>
        </authorList>
    </citation>
    <scope>NUCLEOTIDE SEQUENCE [LARGE SCALE GENOMIC DNA]</scope>
</reference>
<reference key="4">
    <citation type="journal article" date="1991" name="J. Gen. Virol.">
        <title>Nucleotide sequence of 42 kbp of vaccinia virus strain WR from near the right inverted terminal repeat.</title>
        <authorList>
            <person name="Smith G.L."/>
            <person name="Chan Y.S."/>
            <person name="Howard S.T."/>
        </authorList>
    </citation>
    <scope>NUCLEOTIDE SEQUENCE [GENOMIC DNA] OF 1-124</scope>
</reference>
<dbReference type="EMBL" id="M23701">
    <property type="protein sequence ID" value="AAA69588.1"/>
    <property type="molecule type" value="Genomic_DNA"/>
</dbReference>
<dbReference type="EMBL" id="M24217">
    <property type="protein sequence ID" value="AAA48345.1"/>
    <property type="molecule type" value="Genomic_DNA"/>
</dbReference>
<dbReference type="EMBL" id="AY243312">
    <property type="protein sequence ID" value="AAO89485.1"/>
    <property type="molecule type" value="Genomic_DNA"/>
</dbReference>
<dbReference type="EMBL" id="D11079">
    <property type="protein sequence ID" value="BAA20973.1"/>
    <property type="molecule type" value="Genomic_DNA"/>
</dbReference>
<dbReference type="PIR" id="D30175">
    <property type="entry name" value="WMVZ21"/>
</dbReference>
<dbReference type="RefSeq" id="YP_233088.1">
    <property type="nucleotide sequence ID" value="NC_006998.1"/>
</dbReference>
<dbReference type="SMR" id="P17365"/>
<dbReference type="GeneID" id="3707583"/>
<dbReference type="KEGG" id="vg:3707583"/>
<dbReference type="Proteomes" id="UP000000344">
    <property type="component" value="Genome"/>
</dbReference>
<dbReference type="Gene3D" id="2.60.240.20">
    <property type="match status" value="1"/>
</dbReference>
<dbReference type="InterPro" id="IPR009172">
    <property type="entry name" value="Orthopox_C13"/>
</dbReference>
<dbReference type="InterPro" id="IPR010806">
    <property type="entry name" value="Poxvirus_TNF-rcpt-II_C"/>
</dbReference>
<dbReference type="Pfam" id="PF07190">
    <property type="entry name" value="CrmD_SECRET"/>
    <property type="match status" value="1"/>
</dbReference>
<dbReference type="PIRSF" id="PIRSF003692">
    <property type="entry name" value="VAC_C14L"/>
    <property type="match status" value="1"/>
</dbReference>